<evidence type="ECO:0000255" key="1">
    <source>
        <dbReference type="HAMAP-Rule" id="MF_00720"/>
    </source>
</evidence>
<keyword id="KW-0235">DNA replication</keyword>
<keyword id="KW-0238">DNA-binding</keyword>
<keyword id="KW-0639">Primosome</keyword>
<name>PRIB_SALSV</name>
<gene>
    <name evidence="1" type="primary">priB</name>
    <name type="ordered locus">SeSA_A4660</name>
</gene>
<protein>
    <recommendedName>
        <fullName evidence="1">Replication restart protein PriB</fullName>
    </recommendedName>
</protein>
<proteinExistence type="inferred from homology"/>
<sequence>MTNRLALSGTVCRAPLRKVSPSGIPHCQFVLEHRSVQEEAGFHRQAWCQMPVIVSGHENQAITHSITVGSRITVQGFISCHKAKNGLSKMVLHAEQIELIDSGD</sequence>
<organism>
    <name type="scientific">Salmonella schwarzengrund (strain CVM19633)</name>
    <dbReference type="NCBI Taxonomy" id="439843"/>
    <lineage>
        <taxon>Bacteria</taxon>
        <taxon>Pseudomonadati</taxon>
        <taxon>Pseudomonadota</taxon>
        <taxon>Gammaproteobacteria</taxon>
        <taxon>Enterobacterales</taxon>
        <taxon>Enterobacteriaceae</taxon>
        <taxon>Salmonella</taxon>
    </lineage>
</organism>
<reference key="1">
    <citation type="journal article" date="2011" name="J. Bacteriol.">
        <title>Comparative genomics of 28 Salmonella enterica isolates: evidence for CRISPR-mediated adaptive sublineage evolution.</title>
        <authorList>
            <person name="Fricke W.F."/>
            <person name="Mammel M.K."/>
            <person name="McDermott P.F."/>
            <person name="Tartera C."/>
            <person name="White D.G."/>
            <person name="Leclerc J.E."/>
            <person name="Ravel J."/>
            <person name="Cebula T.A."/>
        </authorList>
    </citation>
    <scope>NUCLEOTIDE SEQUENCE [LARGE SCALE GENOMIC DNA]</scope>
    <source>
        <strain>CVM19633</strain>
    </source>
</reference>
<comment type="function">
    <text evidence="1">Involved in the restart of stalled replication forks, which reloads the replicative helicase on sites other than the origin of replication; the PriA-PriB pathway is the major replication restart pathway. During primosome assembly it facilitates complex formation between PriA and DnaT on DNA; stabilizes PriA on DNA. Stimulates the DNA unwinding activity of PriA helicase.</text>
</comment>
<comment type="subunit">
    <text evidence="1">Homodimer. Interacts with PriA and DnaT. Component of the replication restart primosome. Primosome assembly occurs via a 'hand-off' mechanism. PriA binds to replication forks, subsequently PriB then DnaT bind; DnaT then displaces ssDNA to generate the helicase loading substrate.</text>
</comment>
<comment type="similarity">
    <text evidence="1">Belongs to the PriB family.</text>
</comment>
<accession>B4TT34</accession>
<dbReference type="EMBL" id="CP001127">
    <property type="protein sequence ID" value="ACF90635.1"/>
    <property type="molecule type" value="Genomic_DNA"/>
</dbReference>
<dbReference type="RefSeq" id="WP_001519453.1">
    <property type="nucleotide sequence ID" value="NC_011094.1"/>
</dbReference>
<dbReference type="SMR" id="B4TT34"/>
<dbReference type="GeneID" id="66758616"/>
<dbReference type="KEGG" id="sew:SeSA_A4660"/>
<dbReference type="HOGENOM" id="CLU_166075_0_0_6"/>
<dbReference type="Proteomes" id="UP000001865">
    <property type="component" value="Chromosome"/>
</dbReference>
<dbReference type="GO" id="GO:1990077">
    <property type="term" value="C:primosome complex"/>
    <property type="evidence" value="ECO:0007669"/>
    <property type="project" value="UniProtKB-KW"/>
</dbReference>
<dbReference type="GO" id="GO:0003697">
    <property type="term" value="F:single-stranded DNA binding"/>
    <property type="evidence" value="ECO:0007669"/>
    <property type="project" value="UniProtKB-UniRule"/>
</dbReference>
<dbReference type="GO" id="GO:0006269">
    <property type="term" value="P:DNA replication, synthesis of primer"/>
    <property type="evidence" value="ECO:0007669"/>
    <property type="project" value="UniProtKB-KW"/>
</dbReference>
<dbReference type="CDD" id="cd04496">
    <property type="entry name" value="SSB_OBF"/>
    <property type="match status" value="1"/>
</dbReference>
<dbReference type="FunFam" id="2.40.50.140:FF:000077">
    <property type="entry name" value="Primosomal replication protein N"/>
    <property type="match status" value="1"/>
</dbReference>
<dbReference type="Gene3D" id="2.40.50.140">
    <property type="entry name" value="Nucleic acid-binding proteins"/>
    <property type="match status" value="1"/>
</dbReference>
<dbReference type="HAMAP" id="MF_00720">
    <property type="entry name" value="PriB"/>
    <property type="match status" value="1"/>
</dbReference>
<dbReference type="InterPro" id="IPR012340">
    <property type="entry name" value="NA-bd_OB-fold"/>
</dbReference>
<dbReference type="InterPro" id="IPR000424">
    <property type="entry name" value="Primosome_PriB/ssb"/>
</dbReference>
<dbReference type="InterPro" id="IPR023646">
    <property type="entry name" value="Prisomal_replication_PriB"/>
</dbReference>
<dbReference type="NCBIfam" id="TIGR04418">
    <property type="entry name" value="PriB_gamma"/>
    <property type="match status" value="1"/>
</dbReference>
<dbReference type="Pfam" id="PF22657">
    <property type="entry name" value="SSB_1"/>
    <property type="match status" value="1"/>
</dbReference>
<dbReference type="PIRSF" id="PIRSF003135">
    <property type="entry name" value="Primosomal_n"/>
    <property type="match status" value="1"/>
</dbReference>
<dbReference type="SUPFAM" id="SSF50249">
    <property type="entry name" value="Nucleic acid-binding proteins"/>
    <property type="match status" value="1"/>
</dbReference>
<dbReference type="PROSITE" id="PS50935">
    <property type="entry name" value="SSB"/>
    <property type="match status" value="1"/>
</dbReference>
<feature type="chain" id="PRO_1000132633" description="Replication restart protein PriB">
    <location>
        <begin position="1"/>
        <end position="104"/>
    </location>
</feature>
<feature type="domain" description="SSB" evidence="1">
    <location>
        <begin position="1"/>
        <end position="101"/>
    </location>
</feature>